<proteinExistence type="evidence at protein level"/>
<organism>
    <name type="scientific">Homo sapiens</name>
    <name type="common">Human</name>
    <dbReference type="NCBI Taxonomy" id="9606"/>
    <lineage>
        <taxon>Eukaryota</taxon>
        <taxon>Metazoa</taxon>
        <taxon>Chordata</taxon>
        <taxon>Craniata</taxon>
        <taxon>Vertebrata</taxon>
        <taxon>Euteleostomi</taxon>
        <taxon>Mammalia</taxon>
        <taxon>Eutheria</taxon>
        <taxon>Euarchontoglires</taxon>
        <taxon>Primates</taxon>
        <taxon>Haplorrhini</taxon>
        <taxon>Catarrhini</taxon>
        <taxon>Hominidae</taxon>
        <taxon>Homo</taxon>
    </lineage>
</organism>
<comment type="function">
    <text evidence="5 6 21">Receptor that mediates the recognition, internalization and degradation of oxidatively modified low density lipoprotein (oxLDL) by vascular endothelial cells. OxLDL is a marker of atherosclerosis that induces vascular endothelial cell activation and dysfunction, resulting in pro-inflammatory responses, pro-oxidative conditions and apoptosis. Its association with oxLDL induces the activation of NF-kappa-B through an increased production of intracellular reactive oxygen and a variety of pro-atherogenic cellular responses including a reduction of nitric oxide (NO) release, monocyte adhesion and apoptosis. In addition to binding oxLDL, it acts as a receptor for the HSP70 protein involved in antigen cross-presentation to naive T-cells in dendritic cells, thereby participating in cell-mediated antigen cross-presentation. Also involved in inflammatory process, by acting as a leukocyte-adhesion molecule at the vascular interface in endotoxin-induced inflammation. Also acts as a receptor for advanced glycation end (AGE) products, activated platelets, monocytes, apoptotic cells and both Gram-negative and Gram-positive bacteria.</text>
</comment>
<comment type="function">
    <text evidence="26">(Microbial infection) May serve as a receptor for adhesin A variant 3 (nadA) of N.meningitidis.</text>
</comment>
<comment type="subunit">
    <text evidence="4 13 16">Homodimer; disulfide-linked. May form a hexamer composed of 3 homodimers. Interacts with HSP70.</text>
</comment>
<comment type="subunit">
    <text evidence="19 20">(Microbial infection) Binds to the head and beginning of the coiled stalk of N.meningitidis adhesin A (nadA) variant 3; binding can be abrogated by monoclonal antibodies against the specific regions of NadA. Binding occurs in protein microarrays, in solution and when LOX-1 is expressed on the cell surface.</text>
</comment>
<comment type="interaction">
    <interactant intactId="EBI-7151999">
        <id>P78380</id>
    </interactant>
    <interactant intactId="EBI-356876">
        <id>P50991</id>
        <label>CCT4</label>
    </interactant>
    <organismsDiffer>false</organismsDiffer>
    <experiments>3</experiments>
</comment>
<comment type="interaction">
    <interactant intactId="EBI-7151999">
        <id>P78380</id>
    </interactant>
    <interactant intactId="EBI-9640912">
        <id>P12259</id>
        <label>F5</label>
    </interactant>
    <organismsDiffer>false</organismsDiffer>
    <experiments>2</experiments>
</comment>
<comment type="interaction">
    <interactant intactId="EBI-7151999">
        <id>P78380</id>
    </interactant>
    <interactant intactId="EBI-7151999">
        <id>P78380</id>
        <label>OLR1</label>
    </interactant>
    <organismsDiffer>false</organismsDiffer>
    <experiments>4</experiments>
</comment>
<comment type="interaction">
    <interactant intactId="EBI-7151999">
        <id>P78380</id>
    </interactant>
    <interactant intactId="EBI-356553">
        <id>P17987</id>
        <label>TCP1</label>
    </interactant>
    <organismsDiffer>false</organismsDiffer>
    <experiments>5</experiments>
</comment>
<comment type="subcellular location">
    <subcellularLocation>
        <location>Cell membrane</location>
        <topology>Lipid-anchor</topology>
    </subcellularLocation>
    <subcellularLocation>
        <location>Cell membrane</location>
        <topology>Single-pass type II membrane protein</topology>
    </subcellularLocation>
    <subcellularLocation>
        <location>Membrane raft</location>
    </subcellularLocation>
    <subcellularLocation>
        <location>Secreted</location>
    </subcellularLocation>
    <text>A secreted form also exists. Localization to membrane rafts requires palmitoylation.</text>
</comment>
<comment type="alternative products">
    <event type="alternative splicing"/>
    <isoform>
        <id>P78380-1</id>
        <name>1</name>
        <sequence type="displayed"/>
    </isoform>
    <isoform>
        <id>P78380-2</id>
        <name>2</name>
        <sequence type="described" ref="VSP_042555"/>
    </isoform>
    <isoform>
        <id>P78380-3</id>
        <name>3</name>
        <sequence type="described" ref="VSP_045277"/>
    </isoform>
</comment>
<comment type="tissue specificity">
    <text evidence="6 21 22">Expressed at high level in endothelial cells and vascular-rich organs such as placenta, lung, liver and brain, aortic intima, bone marrow, spinal cord and substantia nigra. Also expressed at the surface of dendritic cells. Widely expressed at intermediate and low level.</text>
</comment>
<comment type="induction">
    <text evidence="10 22">By inflammatory cytokines such as TNF, IFNG/IFN-gamma, IL6/interleukin-6 and by pathological conditions such as hyperlipidemia, hypertension and diabetes mellitus. Up-regulated in atherosclerotic lesions, by oxLDL, reactive oxygen species and fluid shear stress, suggesting that it may participate in amplification of oxLDL-induced vascular dysfunction.</text>
</comment>
<comment type="domain">
    <text>The cytoplasmic region is required for subcellular sorting on the cell surface.</text>
</comment>
<comment type="domain">
    <text>The C-type lectin domain mediates the recognition and binding of oxLDL.</text>
</comment>
<comment type="PTM">
    <text>The intrachain disulfide-bonds prevent N-glycosylation at some sites.</text>
</comment>
<comment type="PTM">
    <text>N-glycosylated.</text>
</comment>
<comment type="disease">
    <text>Independent association genetic studies have implicated OLR1 gene variants in myocardial infarction susceptibility.</text>
</comment>
<comment type="disease">
    <text evidence="7 9 14">OLR1 may be involved in Alzheimer disease (AD). Involvement in AD is however unclear: according to some authors, variations in OLR1 modify the risk of AD (PubMed:12354387, PubMed:12810610, PubMed:15976314). While according to others they do not (PubMed:15000751, PubMed:15060104).</text>
</comment>
<comment type="online information" name="Functional Glycomics Gateway - Glycan Binding">
    <link uri="http://www.functionalglycomics.org/glycomics/GBPServlet?&amp;operationType=view&amp;cbpId=cbp_hum_Ctlect_249"/>
    <text>Oxidized LDL receptor</text>
</comment>
<gene>
    <name type="primary">OLR1</name>
    <name type="synonym">CLEC8A</name>
    <name type="synonym">LOX1</name>
</gene>
<evidence type="ECO:0000255" key="1"/>
<evidence type="ECO:0000255" key="2">
    <source>
        <dbReference type="PROSITE-ProRule" id="PRU00040"/>
    </source>
</evidence>
<evidence type="ECO:0000256" key="3">
    <source>
        <dbReference type="SAM" id="MobiDB-lite"/>
    </source>
</evidence>
<evidence type="ECO:0000269" key="4">
    <source>
    </source>
</evidence>
<evidence type="ECO:0000269" key="5">
    <source>
    </source>
</evidence>
<evidence type="ECO:0000269" key="6">
    <source>
    </source>
</evidence>
<evidence type="ECO:0000269" key="7">
    <source>
    </source>
</evidence>
<evidence type="ECO:0000269" key="8">
    <source>
    </source>
</evidence>
<evidence type="ECO:0000269" key="9">
    <source>
    </source>
</evidence>
<evidence type="ECO:0000269" key="10">
    <source>
    </source>
</evidence>
<evidence type="ECO:0000269" key="11">
    <source>
    </source>
</evidence>
<evidence type="ECO:0000269" key="12">
    <source>
    </source>
</evidence>
<evidence type="ECO:0000269" key="13">
    <source>
    </source>
</evidence>
<evidence type="ECO:0000269" key="14">
    <source>
    </source>
</evidence>
<evidence type="ECO:0000269" key="15">
    <source>
    </source>
</evidence>
<evidence type="ECO:0000269" key="16">
    <source>
    </source>
</evidence>
<evidence type="ECO:0000269" key="17">
    <source>
    </source>
</evidence>
<evidence type="ECO:0000269" key="18">
    <source>
    </source>
</evidence>
<evidence type="ECO:0000269" key="19">
    <source>
    </source>
</evidence>
<evidence type="ECO:0000269" key="20">
    <source>
    </source>
</evidence>
<evidence type="ECO:0000269" key="21">
    <source>
    </source>
</evidence>
<evidence type="ECO:0000269" key="22">
    <source>
    </source>
</evidence>
<evidence type="ECO:0000303" key="23">
    <source>
    </source>
</evidence>
<evidence type="ECO:0000303" key="24">
    <source ref="7"/>
</evidence>
<evidence type="ECO:0000305" key="25"/>
<evidence type="ECO:0000305" key="26">
    <source>
    </source>
</evidence>
<evidence type="ECO:0007829" key="27">
    <source>
        <dbReference type="PDB" id="1YPO"/>
    </source>
</evidence>
<evidence type="ECO:0007829" key="28">
    <source>
        <dbReference type="PDB" id="6TL7"/>
    </source>
</evidence>
<name>OLR1_HUMAN</name>
<accession>P78380</accession>
<accession>A8K7V9</accession>
<accession>B4DI48</accession>
<accession>G3V1I4</accession>
<accession>Q2PP00</accession>
<accession>Q7Z484</accession>
<reference key="1">
    <citation type="journal article" date="1997" name="Nature">
        <title>An endothelial receptor for oxidized low-density lipoprotein.</title>
        <authorList>
            <person name="Sawamura T."/>
            <person name="Kume N."/>
            <person name="Aoyama T."/>
            <person name="Moriwaki H."/>
            <person name="Hoshikawa H."/>
            <person name="Aiba Y."/>
            <person name="Tanaka T."/>
            <person name="Miwa S."/>
            <person name="Katsura Y."/>
            <person name="Kita T."/>
            <person name="Masaki T."/>
        </authorList>
    </citation>
    <scope>NUCLEOTIDE SEQUENCE [MRNA] (ISOFORM 1)</scope>
    <scope>FUNCTION</scope>
    <scope>TISSUE SPECIFICITY</scope>
    <source>
        <tissue>Lung</tissue>
    </source>
</reference>
<reference key="2">
    <citation type="journal article" date="1998" name="Cytogenet. Cell Genet.">
        <title>Assignment of the human oxidized low-density lipoprotein receptor gene (OLR1) to chromosome 12p13.1--&gt;p12.3, and identification of a polymorphic CA-repeat marker in the OLR1 gene.</title>
        <authorList>
            <person name="Li X."/>
            <person name="Bouzyk M.M."/>
            <person name="Wang X."/>
        </authorList>
    </citation>
    <scope>NUCLEOTIDE SEQUENCE [MRNA] (ISOFORM 1)</scope>
</reference>
<reference key="3">
    <citation type="journal article" date="2001" name="J. Cell Sci.">
        <title>Characterization of residues and sequences of the carbohydrate recognition domain required for cell surface localization and ligand binding of human lectin-like oxidized LDL receptor.</title>
        <authorList>
            <person name="Shi X."/>
            <person name="Niimi S."/>
            <person name="Ohtani T."/>
            <person name="Machida S."/>
        </authorList>
    </citation>
    <scope>NUCLEOTIDE SEQUENCE [MRNA] (ISOFORM 1)</scope>
    <scope>DOMAIN</scope>
    <scope>DISULFIDE BONDS</scope>
    <scope>GLYCOSYLATION</scope>
    <scope>MUTAGENESIS OF CYS-144; CYS-155; CYS-172; ASN-183; 209-ARG-ASN-210; HIS-226; ARG-229; ARG-231; 235-SER-GLN-236; SER-240; CYS-243; CYS-256; CYS-264 AND 267-LYS--GLN-273</scope>
</reference>
<reference key="4">
    <citation type="journal article" date="1998" name="Genomics">
        <title>The human gene encoding the lectin-type oxidized LDL receptor (OLR1) is a novel member of the natural killer gene complex with a unique expression profile.</title>
        <authorList>
            <person name="Yamanaka S."/>
            <person name="Zhang X.-Y."/>
            <person name="Miura K."/>
            <person name="Kim S."/>
            <person name="Iwao H."/>
        </authorList>
    </citation>
    <scope>NUCLEOTIDE SEQUENCE [GENOMIC DNA]</scope>
    <scope>TISSUE SPECIFICITY</scope>
    <scope>INDUCTION</scope>
</reference>
<reference key="5">
    <citation type="journal article" date="2003" name="Biochem. Biophys. Res. Commun.">
        <title>Oxidized LDL receptor gene (OLR1) is associated with the risk of myocardial infarction.</title>
        <authorList>
            <person name="Tatsuguchi M."/>
            <person name="Furutani M."/>
            <person name="Hinagata J."/>
            <person name="Tanaka T."/>
            <person name="Furutani Y."/>
            <person name="Imamura S."/>
            <person name="Kawana M."/>
            <person name="Masaki T."/>
            <person name="Kasanuki H."/>
            <person name="Sawamura T."/>
            <person name="Matsuoka R."/>
        </authorList>
    </citation>
    <scope>NUCLEOTIDE SEQUENCE [MRNA] (ISOFORM 1)</scope>
    <scope>INVOLVEMENT IN MYOCARDIAL INFARCTION</scope>
    <scope>VARIANT ASN-167</scope>
</reference>
<reference key="6">
    <citation type="submission" date="1999-02" db="EMBL/GenBank/DDBJ databases">
        <authorList>
            <person name="Millar D.S."/>
        </authorList>
    </citation>
    <scope>NUCLEOTIDE SEQUENCE [GENOMIC DNA]</scope>
</reference>
<reference key="7">
    <citation type="submission" date="2003-04" db="EMBL/GenBank/DDBJ databases">
        <title>Full-length cDNA libraries and normalization.</title>
        <authorList>
            <person name="Li W.B."/>
            <person name="Gruber C."/>
            <person name="Jessee J."/>
            <person name="Polayes D."/>
        </authorList>
    </citation>
    <scope>NUCLEOTIDE SEQUENCE [LARGE SCALE MRNA] (ISOFORM 3)</scope>
    <source>
        <tissue>Placenta</tissue>
    </source>
</reference>
<reference key="8">
    <citation type="journal article" date="2004" name="Nat. Genet.">
        <title>Complete sequencing and characterization of 21,243 full-length human cDNAs.</title>
        <authorList>
            <person name="Ota T."/>
            <person name="Suzuki Y."/>
            <person name="Nishikawa T."/>
            <person name="Otsuki T."/>
            <person name="Sugiyama T."/>
            <person name="Irie R."/>
            <person name="Wakamatsu A."/>
            <person name="Hayashi K."/>
            <person name="Sato H."/>
            <person name="Nagai K."/>
            <person name="Kimura K."/>
            <person name="Makita H."/>
            <person name="Sekine M."/>
            <person name="Obayashi M."/>
            <person name="Nishi T."/>
            <person name="Shibahara T."/>
            <person name="Tanaka T."/>
            <person name="Ishii S."/>
            <person name="Yamamoto J."/>
            <person name="Saito K."/>
            <person name="Kawai Y."/>
            <person name="Isono Y."/>
            <person name="Nakamura Y."/>
            <person name="Nagahari K."/>
            <person name="Murakami K."/>
            <person name="Yasuda T."/>
            <person name="Iwayanagi T."/>
            <person name="Wagatsuma M."/>
            <person name="Shiratori A."/>
            <person name="Sudo H."/>
            <person name="Hosoiri T."/>
            <person name="Kaku Y."/>
            <person name="Kodaira H."/>
            <person name="Kondo H."/>
            <person name="Sugawara M."/>
            <person name="Takahashi M."/>
            <person name="Kanda K."/>
            <person name="Yokoi T."/>
            <person name="Furuya T."/>
            <person name="Kikkawa E."/>
            <person name="Omura Y."/>
            <person name="Abe K."/>
            <person name="Kamihara K."/>
            <person name="Katsuta N."/>
            <person name="Sato K."/>
            <person name="Tanikawa M."/>
            <person name="Yamazaki M."/>
            <person name="Ninomiya K."/>
            <person name="Ishibashi T."/>
            <person name="Yamashita H."/>
            <person name="Murakawa K."/>
            <person name="Fujimori K."/>
            <person name="Tanai H."/>
            <person name="Kimata M."/>
            <person name="Watanabe M."/>
            <person name="Hiraoka S."/>
            <person name="Chiba Y."/>
            <person name="Ishida S."/>
            <person name="Ono Y."/>
            <person name="Takiguchi S."/>
            <person name="Watanabe S."/>
            <person name="Yosida M."/>
            <person name="Hotuta T."/>
            <person name="Kusano J."/>
            <person name="Kanehori K."/>
            <person name="Takahashi-Fujii A."/>
            <person name="Hara H."/>
            <person name="Tanase T.-O."/>
            <person name="Nomura Y."/>
            <person name="Togiya S."/>
            <person name="Komai F."/>
            <person name="Hara R."/>
            <person name="Takeuchi K."/>
            <person name="Arita M."/>
            <person name="Imose N."/>
            <person name="Musashino K."/>
            <person name="Yuuki H."/>
            <person name="Oshima A."/>
            <person name="Sasaki N."/>
            <person name="Aotsuka S."/>
            <person name="Yoshikawa Y."/>
            <person name="Matsunawa H."/>
            <person name="Ichihara T."/>
            <person name="Shiohata N."/>
            <person name="Sano S."/>
            <person name="Moriya S."/>
            <person name="Momiyama H."/>
            <person name="Satoh N."/>
            <person name="Takami S."/>
            <person name="Terashima Y."/>
            <person name="Suzuki O."/>
            <person name="Nakagawa S."/>
            <person name="Senoh A."/>
            <person name="Mizoguchi H."/>
            <person name="Goto Y."/>
            <person name="Shimizu F."/>
            <person name="Wakebe H."/>
            <person name="Hishigaki H."/>
            <person name="Watanabe T."/>
            <person name="Sugiyama A."/>
            <person name="Takemoto M."/>
            <person name="Kawakami B."/>
            <person name="Yamazaki M."/>
            <person name="Watanabe K."/>
            <person name="Kumagai A."/>
            <person name="Itakura S."/>
            <person name="Fukuzumi Y."/>
            <person name="Fujimori Y."/>
            <person name="Komiyama M."/>
            <person name="Tashiro H."/>
            <person name="Tanigami A."/>
            <person name="Fujiwara T."/>
            <person name="Ono T."/>
            <person name="Yamada K."/>
            <person name="Fujii Y."/>
            <person name="Ozaki K."/>
            <person name="Hirao M."/>
            <person name="Ohmori Y."/>
            <person name="Kawabata A."/>
            <person name="Hikiji T."/>
            <person name="Kobatake N."/>
            <person name="Inagaki H."/>
            <person name="Ikema Y."/>
            <person name="Okamoto S."/>
            <person name="Okitani R."/>
            <person name="Kawakami T."/>
            <person name="Noguchi S."/>
            <person name="Itoh T."/>
            <person name="Shigeta K."/>
            <person name="Senba T."/>
            <person name="Matsumura K."/>
            <person name="Nakajima Y."/>
            <person name="Mizuno T."/>
            <person name="Morinaga M."/>
            <person name="Sasaki M."/>
            <person name="Togashi T."/>
            <person name="Oyama M."/>
            <person name="Hata H."/>
            <person name="Watanabe M."/>
            <person name="Komatsu T."/>
            <person name="Mizushima-Sugano J."/>
            <person name="Satoh T."/>
            <person name="Shirai Y."/>
            <person name="Takahashi Y."/>
            <person name="Nakagawa K."/>
            <person name="Okumura K."/>
            <person name="Nagase T."/>
            <person name="Nomura N."/>
            <person name="Kikuchi H."/>
            <person name="Masuho Y."/>
            <person name="Yamashita R."/>
            <person name="Nakai K."/>
            <person name="Yada T."/>
            <person name="Nakamura Y."/>
            <person name="Ohara O."/>
            <person name="Isogai T."/>
            <person name="Sugano S."/>
        </authorList>
    </citation>
    <scope>NUCLEOTIDE SEQUENCE [LARGE SCALE MRNA] (ISOFORMS 1 AND 2)</scope>
    <scope>VARIANT ASN-167</scope>
    <source>
        <tissue>Corpus callosum</tissue>
        <tissue>Synovial cell</tissue>
    </source>
</reference>
<reference key="9">
    <citation type="submission" date="2005-12" db="EMBL/GenBank/DDBJ databases">
        <authorList>
            <consortium name="NHLBI resequencing and genotyping service (RS&amp;G)"/>
        </authorList>
    </citation>
    <scope>NUCLEOTIDE SEQUENCE [GENOMIC DNA]</scope>
</reference>
<reference key="10">
    <citation type="journal article" date="2006" name="Nature">
        <title>The finished DNA sequence of human chromosome 12.</title>
        <authorList>
            <person name="Scherer S.E."/>
            <person name="Muzny D.M."/>
            <person name="Buhay C.J."/>
            <person name="Chen R."/>
            <person name="Cree A."/>
            <person name="Ding Y."/>
            <person name="Dugan-Rocha S."/>
            <person name="Gill R."/>
            <person name="Gunaratne P."/>
            <person name="Harris R.A."/>
            <person name="Hawes A.C."/>
            <person name="Hernandez J."/>
            <person name="Hodgson A.V."/>
            <person name="Hume J."/>
            <person name="Jackson A."/>
            <person name="Khan Z.M."/>
            <person name="Kovar-Smith C."/>
            <person name="Lewis L.R."/>
            <person name="Lozado R.J."/>
            <person name="Metzker M.L."/>
            <person name="Milosavljevic A."/>
            <person name="Miner G.R."/>
            <person name="Montgomery K.T."/>
            <person name="Morgan M.B."/>
            <person name="Nazareth L.V."/>
            <person name="Scott G."/>
            <person name="Sodergren E."/>
            <person name="Song X.-Z."/>
            <person name="Steffen D."/>
            <person name="Lovering R.C."/>
            <person name="Wheeler D.A."/>
            <person name="Worley K.C."/>
            <person name="Yuan Y."/>
            <person name="Zhang Z."/>
            <person name="Adams C.Q."/>
            <person name="Ansari-Lari M.A."/>
            <person name="Ayele M."/>
            <person name="Brown M.J."/>
            <person name="Chen G."/>
            <person name="Chen Z."/>
            <person name="Clerc-Blankenburg K.P."/>
            <person name="Davis C."/>
            <person name="Delgado O."/>
            <person name="Dinh H.H."/>
            <person name="Draper H."/>
            <person name="Gonzalez-Garay M.L."/>
            <person name="Havlak P."/>
            <person name="Jackson L.R."/>
            <person name="Jacob L.S."/>
            <person name="Kelly S.H."/>
            <person name="Li L."/>
            <person name="Li Z."/>
            <person name="Liu J."/>
            <person name="Liu W."/>
            <person name="Lu J."/>
            <person name="Maheshwari M."/>
            <person name="Nguyen B.-V."/>
            <person name="Okwuonu G.O."/>
            <person name="Pasternak S."/>
            <person name="Perez L.M."/>
            <person name="Plopper F.J.H."/>
            <person name="Santibanez J."/>
            <person name="Shen H."/>
            <person name="Tabor P.E."/>
            <person name="Verduzco D."/>
            <person name="Waldron L."/>
            <person name="Wang Q."/>
            <person name="Williams G.A."/>
            <person name="Zhang J."/>
            <person name="Zhou J."/>
            <person name="Allen C.C."/>
            <person name="Amin A.G."/>
            <person name="Anyalebechi V."/>
            <person name="Bailey M."/>
            <person name="Barbaria J.A."/>
            <person name="Bimage K.E."/>
            <person name="Bryant N.P."/>
            <person name="Burch P.E."/>
            <person name="Burkett C.E."/>
            <person name="Burrell K.L."/>
            <person name="Calderon E."/>
            <person name="Cardenas V."/>
            <person name="Carter K."/>
            <person name="Casias K."/>
            <person name="Cavazos I."/>
            <person name="Cavazos S.R."/>
            <person name="Ceasar H."/>
            <person name="Chacko J."/>
            <person name="Chan S.N."/>
            <person name="Chavez D."/>
            <person name="Christopoulos C."/>
            <person name="Chu J."/>
            <person name="Cockrell R."/>
            <person name="Cox C.D."/>
            <person name="Dang M."/>
            <person name="Dathorne S.R."/>
            <person name="David R."/>
            <person name="Davis C.M."/>
            <person name="Davy-Carroll L."/>
            <person name="Deshazo D.R."/>
            <person name="Donlin J.E."/>
            <person name="D'Souza L."/>
            <person name="Eaves K.A."/>
            <person name="Egan A."/>
            <person name="Emery-Cohen A.J."/>
            <person name="Escotto M."/>
            <person name="Flagg N."/>
            <person name="Forbes L.D."/>
            <person name="Gabisi A.M."/>
            <person name="Garza M."/>
            <person name="Hamilton C."/>
            <person name="Henderson N."/>
            <person name="Hernandez O."/>
            <person name="Hines S."/>
            <person name="Hogues M.E."/>
            <person name="Huang M."/>
            <person name="Idlebird D.G."/>
            <person name="Johnson R."/>
            <person name="Jolivet A."/>
            <person name="Jones S."/>
            <person name="Kagan R."/>
            <person name="King L.M."/>
            <person name="Leal B."/>
            <person name="Lebow H."/>
            <person name="Lee S."/>
            <person name="LeVan J.M."/>
            <person name="Lewis L.C."/>
            <person name="London P."/>
            <person name="Lorensuhewa L.M."/>
            <person name="Loulseged H."/>
            <person name="Lovett D.A."/>
            <person name="Lucier A."/>
            <person name="Lucier R.L."/>
            <person name="Ma J."/>
            <person name="Madu R.C."/>
            <person name="Mapua P."/>
            <person name="Martindale A.D."/>
            <person name="Martinez E."/>
            <person name="Massey E."/>
            <person name="Mawhiney S."/>
            <person name="Meador M.G."/>
            <person name="Mendez S."/>
            <person name="Mercado C."/>
            <person name="Mercado I.C."/>
            <person name="Merritt C.E."/>
            <person name="Miner Z.L."/>
            <person name="Minja E."/>
            <person name="Mitchell T."/>
            <person name="Mohabbat F."/>
            <person name="Mohabbat K."/>
            <person name="Montgomery B."/>
            <person name="Moore N."/>
            <person name="Morris S."/>
            <person name="Munidasa M."/>
            <person name="Ngo R.N."/>
            <person name="Nguyen N.B."/>
            <person name="Nickerson E."/>
            <person name="Nwaokelemeh O.O."/>
            <person name="Nwokenkwo S."/>
            <person name="Obregon M."/>
            <person name="Oguh M."/>
            <person name="Oragunye N."/>
            <person name="Oviedo R.J."/>
            <person name="Parish B.J."/>
            <person name="Parker D.N."/>
            <person name="Parrish J."/>
            <person name="Parks K.L."/>
            <person name="Paul H.A."/>
            <person name="Payton B.A."/>
            <person name="Perez A."/>
            <person name="Perrin W."/>
            <person name="Pickens A."/>
            <person name="Primus E.L."/>
            <person name="Pu L.-L."/>
            <person name="Puazo M."/>
            <person name="Quiles M.M."/>
            <person name="Quiroz J.B."/>
            <person name="Rabata D."/>
            <person name="Reeves K."/>
            <person name="Ruiz S.J."/>
            <person name="Shao H."/>
            <person name="Sisson I."/>
            <person name="Sonaike T."/>
            <person name="Sorelle R.P."/>
            <person name="Sutton A.E."/>
            <person name="Svatek A.F."/>
            <person name="Svetz L.A."/>
            <person name="Tamerisa K.S."/>
            <person name="Taylor T.R."/>
            <person name="Teague B."/>
            <person name="Thomas N."/>
            <person name="Thorn R.D."/>
            <person name="Trejos Z.Y."/>
            <person name="Trevino B.K."/>
            <person name="Ukegbu O.N."/>
            <person name="Urban J.B."/>
            <person name="Vasquez L.I."/>
            <person name="Vera V.A."/>
            <person name="Villasana D.M."/>
            <person name="Wang L."/>
            <person name="Ward-Moore S."/>
            <person name="Warren J.T."/>
            <person name="Wei X."/>
            <person name="White F."/>
            <person name="Williamson A.L."/>
            <person name="Wleczyk R."/>
            <person name="Wooden H.S."/>
            <person name="Wooden S.H."/>
            <person name="Yen J."/>
            <person name="Yoon L."/>
            <person name="Yoon V."/>
            <person name="Zorrilla S.E."/>
            <person name="Nelson D."/>
            <person name="Kucherlapati R."/>
            <person name="Weinstock G."/>
            <person name="Gibbs R.A."/>
        </authorList>
    </citation>
    <scope>NUCLEOTIDE SEQUENCE [LARGE SCALE GENOMIC DNA]</scope>
</reference>
<reference key="11">
    <citation type="submission" date="2005-07" db="EMBL/GenBank/DDBJ databases">
        <authorList>
            <person name="Mural R.J."/>
            <person name="Istrail S."/>
            <person name="Sutton G."/>
            <person name="Florea L."/>
            <person name="Halpern A.L."/>
            <person name="Mobarry C.M."/>
            <person name="Lippert R."/>
            <person name="Walenz B."/>
            <person name="Shatkay H."/>
            <person name="Dew I."/>
            <person name="Miller J.R."/>
            <person name="Flanigan M.J."/>
            <person name="Edwards N.J."/>
            <person name="Bolanos R."/>
            <person name="Fasulo D."/>
            <person name="Halldorsson B.V."/>
            <person name="Hannenhalli S."/>
            <person name="Turner R."/>
            <person name="Yooseph S."/>
            <person name="Lu F."/>
            <person name="Nusskern D.R."/>
            <person name="Shue B.C."/>
            <person name="Zheng X.H."/>
            <person name="Zhong F."/>
            <person name="Delcher A.L."/>
            <person name="Huson D.H."/>
            <person name="Kravitz S.A."/>
            <person name="Mouchard L."/>
            <person name="Reinert K."/>
            <person name="Remington K.A."/>
            <person name="Clark A.G."/>
            <person name="Waterman M.S."/>
            <person name="Eichler E.E."/>
            <person name="Adams M.D."/>
            <person name="Hunkapiller M.W."/>
            <person name="Myers E.W."/>
            <person name="Venter J.C."/>
        </authorList>
    </citation>
    <scope>NUCLEOTIDE SEQUENCE [LARGE SCALE GENOMIC DNA]</scope>
</reference>
<reference key="12">
    <citation type="journal article" date="2004" name="Genome Res.">
        <title>The status, quality, and expansion of the NIH full-length cDNA project: the Mammalian Gene Collection (MGC).</title>
        <authorList>
            <consortium name="The MGC Project Team"/>
        </authorList>
    </citation>
    <scope>NUCLEOTIDE SEQUENCE [LARGE SCALE MRNA] (ISOFORM 1)</scope>
    <source>
        <tissue>Placenta</tissue>
    </source>
</reference>
<reference key="13">
    <citation type="journal article" date="2002" name="FEBS Lett.">
        <title>Lectin-like oxidized LDL receptor-1 (LOX-1) supports adhesion of mononuclear leukocytes and a monocyte-like cell line THP-1 cells under static and flow conditions.</title>
        <authorList>
            <person name="Hayashida K."/>
            <person name="Kume N."/>
            <person name="Minami M."/>
            <person name="Kita T."/>
        </authorList>
    </citation>
    <scope>FUNCTION</scope>
</reference>
<reference key="14">
    <citation type="journal article" date="2002" name="Immunity">
        <title>Involvement of LOX-1 in dendritic cell-mediated antigen cross-presentation.</title>
        <authorList>
            <person name="Delneste Y."/>
            <person name="Magistrelli G."/>
            <person name="Gauchat J.-F."/>
            <person name="Haeuw J.-P."/>
            <person name="Aubry J.-F."/>
            <person name="Nakamura K."/>
            <person name="Kawakami-Honda N."/>
            <person name="Goetsch L."/>
            <person name="Sawamura T."/>
            <person name="Bonnefoy J.-Y."/>
            <person name="Jeannin P."/>
        </authorList>
    </citation>
    <scope>FUNCTION</scope>
    <scope>TISSUE SPECIFICITY</scope>
</reference>
<reference key="15">
    <citation type="journal article" date="2002" name="Hum. Genet.">
        <title>Investigation of oxidized LDL-receptor 1 (OLR1) as the candidate gene for Alzheimer's disease on chromosome 12.</title>
        <authorList>
            <person name="Luedecking-Zimmer E."/>
            <person name="DeKosky S.T."/>
            <person name="Chen Q."/>
            <person name="Barmada M.M."/>
            <person name="Kamboh M.I."/>
        </authorList>
    </citation>
    <scope>INVOLVEMENT IN ALZHEIMER DISEASE</scope>
</reference>
<reference key="16">
    <citation type="journal article" date="2003" name="Biochem. Biophys. Res. Commun.">
        <title>Oxidized LDL through LOX-1 modulates LDL-receptor expression in human coronary artery endothelial cells.</title>
        <authorList>
            <person name="Hu B."/>
            <person name="Li D."/>
            <person name="Sawamura T."/>
            <person name="Mehta J.L."/>
        </authorList>
    </citation>
    <scope>INDUCTION</scope>
</reference>
<reference key="17">
    <citation type="journal article" date="2003" name="Circulation">
        <title>Genetic variation in lectin-like oxidized low-density lipoprotein receptor 1 (LOX1) gene and the risk of coronary artery disease.</title>
        <authorList>
            <person name="Chen Q."/>
            <person name="Reis S.E."/>
            <person name="Kammerer C."/>
            <person name="Craig W.Y."/>
            <person name="LaPierre S.E."/>
            <person name="Zimmer E.L."/>
            <person name="McNamara D.M."/>
            <person name="Pauly D.F."/>
            <person name="Sharaf B."/>
            <person name="Holubkov R."/>
            <person name="Bairey Merz C.N."/>
            <person name="Sopko G."/>
            <person name="Bontempo F."/>
            <person name="Kamboh M.I."/>
        </authorList>
    </citation>
    <scope>INVOLVEMENT IN MYOCARDIAL INFARCTION</scope>
</reference>
<reference key="18">
    <citation type="journal article" date="2003" name="J. Med. Genet.">
        <title>Association of 3'-UTR polymorphisms of the oxidised LDL receptor 1 (OLR1) gene with Alzheimer's disease.</title>
        <authorList>
            <person name="Lambert J.-C."/>
            <person name="Luedecking-Zimmer E."/>
            <person name="Merrot S."/>
            <person name="Hayes A."/>
            <person name="Thaker U."/>
            <person name="Desai P."/>
            <person name="Houzet A."/>
            <person name="Hermant X."/>
            <person name="Cottel D."/>
            <person name="Pritchard A."/>
            <person name="Iwatsubo T."/>
            <person name="Pasquier F."/>
            <person name="Frigard B."/>
            <person name="Conneally P.M."/>
            <person name="Chartier-Harlin M.-C."/>
            <person name="DeKosky S.T."/>
            <person name="Lendon C."/>
            <person name="Mann D."/>
            <person name="Kamboh M.I."/>
            <person name="Amouyel P."/>
        </authorList>
    </citation>
    <scope>INVOLVEMENT IN ALZHEIMER DISEASE</scope>
</reference>
<reference key="19">
    <citation type="journal article" date="2004" name="DNA Cell Biol.">
        <title>Human lectin-like oxidized low-density lipoprotein receptor-1 functions as a dimer in living cells.</title>
        <authorList>
            <person name="Xie Q."/>
            <person name="Matsunaga S."/>
            <person name="Niimi S."/>
            <person name="Ogawa S."/>
            <person name="Tokuyasu K."/>
            <person name="Sakakibara Y."/>
            <person name="Machida S."/>
        </authorList>
    </citation>
    <scope>HOMODIMERIZATION</scope>
    <scope>INTERCHAIN DISULFIDE BOND</scope>
    <scope>MUTAGENESIS OF CYS-140</scope>
</reference>
<reference key="20">
    <citation type="journal article" date="2004" name="J. Med. Genet.">
        <title>No association between a previously reported OLR1 3' UTR polymorphism and Alzheimer's disease in a large family sample.</title>
        <authorList>
            <person name="Bertram L."/>
            <person name="Parkinson M."/>
            <person name="Mullin K."/>
            <person name="Menon R."/>
            <person name="Blacker D."/>
            <person name="Tanzi R.E."/>
        </authorList>
    </citation>
    <scope>LACK OF INVOLVEMENT IN ALZHEIMER DISEASE</scope>
</reference>
<reference key="21">
    <citation type="journal article" date="2004" name="Neurosci. Lett.">
        <title>No association between polymorphisms in the lectin-like oxidised low density lipoprotein receptor (ORL1) gene on chromosome 12 and Alzheimer's disease in a UK cohort.</title>
        <authorList>
            <person name="Pritchard A."/>
            <person name="St Clair D."/>
            <person name="Lemmon H."/>
            <person name="Mann D.M.A."/>
            <person name="Lendon C."/>
        </authorList>
    </citation>
    <scope>LACK OF INVOLVEMENT IN ALZHEIMER DISEASE</scope>
</reference>
<reference key="22">
    <citation type="journal article" date="2005" name="Circ. Res.">
        <title>In vivo and in vitro studies support that a new splicing isoform of OLR1 gene is protective against acute myocardial infarction.</title>
        <authorList>
            <person name="Mango R."/>
            <person name="Biocca S."/>
            <person name="del Vecchio F."/>
            <person name="Clementi F."/>
            <person name="Sangiuolo F."/>
            <person name="Amati F."/>
            <person name="Filareto A."/>
            <person name="Grelli S."/>
            <person name="Spitalieri P."/>
            <person name="Filesi I."/>
            <person name="Favalli C."/>
            <person name="Lauro R."/>
            <person name="Mehta J.L."/>
            <person name="Romeo F."/>
            <person name="Novelli G."/>
        </authorList>
    </citation>
    <scope>INVOLVEMENT IN MYOCARDIAL INFARCTION</scope>
</reference>
<reference key="23">
    <citation type="journal article" date="2005" name="J. Gerontol.">
        <title>Polymorphisms in the oxidized low-density lipoprotein receptor-1 gene and risk of Alzheimer's disease.</title>
        <authorList>
            <person name="D'Introno A."/>
            <person name="Solfrizzi V."/>
            <person name="Colacicco A.M."/>
            <person name="Capurso C."/>
            <person name="Torres F."/>
            <person name="Capurso S.A."/>
            <person name="Capurso A."/>
            <person name="Panza F."/>
        </authorList>
    </citation>
    <scope>INVOLVEMENT IN ALZHEIMER DISEASE</scope>
</reference>
<reference key="24">
    <citation type="journal article" date="2005" name="J. Mol. Cell. Cardiol.">
        <title>Essential role of cytoplasmic sequences for cell-surface sorting of the lectin-like oxidized LDL receptor-1 (LOX-1).</title>
        <authorList>
            <person name="Chen M."/>
            <person name="Sawamura T."/>
        </authorList>
    </citation>
    <scope>DOMAIN</scope>
    <scope>SUBCELLULAR LOCATION</scope>
    <scope>MUTAGENESIS OF 22-LYS--LYS-25 AND GLU-70</scope>
</reference>
<reference key="25">
    <citation type="journal article" date="2012" name="Glycoconj. J.">
        <title>Site-specific N-glycosylation identification of recombinant human lectin-like oxidized low density lipoprotein receptor-1 (LOX-1).</title>
        <authorList>
            <person name="Qian Y."/>
            <person name="Zhang X."/>
            <person name="Zhou L."/>
            <person name="Yun X."/>
            <person name="Xie J."/>
            <person name="Xu J."/>
            <person name="Ruan Y."/>
            <person name="Ren S."/>
        </authorList>
    </citation>
    <scope>GLYCOSYLATION AT ASN-139</scope>
</reference>
<reference key="26">
    <citation type="journal article" date="2013" name="Biochem. Biophys. Res. Commun.">
        <title>Lectin-like oxidized LDL receptor-1 is palmitoylated and internalizes ligands via caveolae/raft-dependent endocytosis.</title>
        <authorList>
            <person name="Kumano-Kuramochi M."/>
            <person name="Xie Q."/>
            <person name="Kajiwara S."/>
            <person name="Komba S."/>
            <person name="Minowa T."/>
            <person name="Machida S."/>
        </authorList>
    </citation>
    <scope>PALMITOYLATION AT CYS-36 AND CYS-46</scope>
    <scope>SUBCELLULAR LOCATION</scope>
</reference>
<reference key="27">
    <citation type="journal article" date="2016" name="Sci. Rep.">
        <title>Exploring host-pathogen interactions through genome wide protein microarray analysis.</title>
        <authorList>
            <person name="Scietti L."/>
            <person name="Sampieri K."/>
            <person name="Pinzuti I."/>
            <person name="Bartolini E."/>
            <person name="Benucci B."/>
            <person name="Liguori A."/>
            <person name="Haag A.F."/>
            <person name="Lo Surdo P."/>
            <person name="Pansegrau W."/>
            <person name="Nardi-Dei V."/>
            <person name="Santini L."/>
            <person name="Arora S."/>
            <person name="Leber X."/>
            <person name="Rindi S."/>
            <person name="Savino S."/>
            <person name="Costantino P."/>
            <person name="Maione D."/>
            <person name="Merola M."/>
            <person name="Speziale P."/>
            <person name="Bottomley M.J."/>
            <person name="Bagnoli F."/>
            <person name="Masignani V."/>
            <person name="Pizza M."/>
            <person name="Scharenberg M."/>
            <person name="Schlaeppi J.M."/>
            <person name="Nissum M."/>
            <person name="Liberatori S."/>
        </authorList>
    </citation>
    <scope>FUNCTION (MICROBIAL INFECTION)</scope>
    <scope>INTERACTION WITH N.MENINGITIDIS ADHESIN A (MICROBIAL INFECTION)</scope>
</reference>
<reference key="28">
    <citation type="journal article" date="2018" name="MBio">
        <title>NadA3 Structures Reveal Undecad Coiled Coils and LOX1 Binding Regions Competed by Meningococcus B Vaccine-Elicited Human Antibodies.</title>
        <authorList>
            <person name="Liguori A."/>
            <person name="Dello Iacono L."/>
            <person name="Maruggi G."/>
            <person name="Benucci B."/>
            <person name="Merola M."/>
            <person name="Lo Surdo P."/>
            <person name="Lopez-Sagaseta J."/>
            <person name="Pizza M."/>
            <person name="Malito E."/>
            <person name="Bottomley M.J."/>
        </authorList>
    </citation>
    <scope>INTERACTION WITH N.MENINGITIDIS ADHESIN A (MICROBIAL INFECTION)</scope>
</reference>
<reference key="29">
    <citation type="journal article" date="2005" name="J. Biol. Chem.">
        <title>The 1.4 angstrom crystal structure of the human oxidized low density lipoprotein receptor lox-1.</title>
        <authorList>
            <person name="Park H."/>
            <person name="Adsit F.G."/>
            <person name="Boyington J.C."/>
        </authorList>
    </citation>
    <scope>X-RAY CRYSTALLOGRAPHY (1.4 ANGSTROMS) OF 136-270</scope>
    <scope>SUBUNIT</scope>
    <scope>DISULFIDE BONDS</scope>
</reference>
<reference key="30">
    <citation type="journal article" date="2005" name="Structure">
        <title>Crystal structure of human lectin-like, oxidized low-density lipoprotein receptor 1 ligand binding domain and its ligand recognition mode to oxLDL.</title>
        <authorList>
            <person name="Ohki I."/>
            <person name="Ishigaki T."/>
            <person name="Oyama T."/>
            <person name="Matsunaga S."/>
            <person name="Xie Q."/>
            <person name="Ohnishi-Kameyama M."/>
            <person name="Murata T."/>
            <person name="Tsuchiya D."/>
            <person name="Machida S."/>
            <person name="Morikawa K."/>
            <person name="Tate S."/>
        </authorList>
    </citation>
    <scope>X-RAY CRYSTALLOGRAPHY (2.4 ANGSTROMS) OF 143-271</scope>
    <scope>SUBUNIT</scope>
    <scope>DISULFIDE BONDS</scope>
    <scope>MUTAGENESIS OF TRP-150; ARG-208; ARG-209; HIS-226; ARG-229; ARG-231 AND ARG-248</scope>
</reference>
<sequence length="273" mass="30959">MTFDDLKIQTVKDQPDEKSNGKKAKGLQFLYSPWWCLAAATLGVLCLGLVVTIMVLGMQLSQVSDLLTQEQANLTHQKKKLEGQISARQQAEEASQESENELKEMIETLARKLNEKSKEQMELHHQNLNLQETLKRVANCSAPCPQDWIWHGENCYLFSSGSFNWEKSQEKCLSLDAKLLKINSTADLDFIQQAISYSSFPFWMGLSRRNPSYPWLWEDGSPLMPHLFRVRGAVSQTYPSGTCAYIQRGAVYAENCILAAFSICQKKANLRAQ</sequence>
<keyword id="KW-0002">3D-structure</keyword>
<keyword id="KW-0025">Alternative splicing</keyword>
<keyword id="KW-0130">Cell adhesion</keyword>
<keyword id="KW-1003">Cell membrane</keyword>
<keyword id="KW-0175">Coiled coil</keyword>
<keyword id="KW-1015">Disulfide bond</keyword>
<keyword id="KW-0325">Glycoprotein</keyword>
<keyword id="KW-0391">Immunity</keyword>
<keyword id="KW-0395">Inflammatory response</keyword>
<keyword id="KW-0430">Lectin</keyword>
<keyword id="KW-0449">Lipoprotein</keyword>
<keyword id="KW-0472">Membrane</keyword>
<keyword id="KW-0564">Palmitate</keyword>
<keyword id="KW-1267">Proteomics identification</keyword>
<keyword id="KW-0675">Receptor</keyword>
<keyword id="KW-1185">Reference proteome</keyword>
<keyword id="KW-0964">Secreted</keyword>
<keyword id="KW-0735">Signal-anchor</keyword>
<keyword id="KW-0812">Transmembrane</keyword>
<keyword id="KW-1133">Transmembrane helix</keyword>
<dbReference type="EMBL" id="AB010710">
    <property type="protein sequence ID" value="BAA24580.1"/>
    <property type="molecule type" value="mRNA"/>
</dbReference>
<dbReference type="EMBL" id="AF035776">
    <property type="protein sequence ID" value="AAC82329.1"/>
    <property type="molecule type" value="mRNA"/>
</dbReference>
<dbReference type="EMBL" id="AF079167">
    <property type="protein sequence ID" value="AAC97927.1"/>
    <property type="molecule type" value="Genomic_DNA"/>
</dbReference>
<dbReference type="EMBL" id="AF079166">
    <property type="protein sequence ID" value="AAC97927.1"/>
    <property type="status" value="JOINED"/>
    <property type="molecule type" value="Genomic_DNA"/>
</dbReference>
<dbReference type="EMBL" id="AF079164">
    <property type="protein sequence ID" value="AAC97927.1"/>
    <property type="status" value="JOINED"/>
    <property type="molecule type" value="Genomic_DNA"/>
</dbReference>
<dbReference type="EMBL" id="AF079165">
    <property type="protein sequence ID" value="AAC97927.1"/>
    <property type="status" value="JOINED"/>
    <property type="molecule type" value="Genomic_DNA"/>
</dbReference>
<dbReference type="EMBL" id="AB102861">
    <property type="protein sequence ID" value="BAC81565.1"/>
    <property type="molecule type" value="mRNA"/>
</dbReference>
<dbReference type="EMBL" id="AJ131757">
    <property type="protein sequence ID" value="CAB38175.1"/>
    <property type="molecule type" value="Genomic_DNA"/>
</dbReference>
<dbReference type="EMBL" id="BX344276">
    <property type="status" value="NOT_ANNOTATED_CDS"/>
    <property type="molecule type" value="mRNA"/>
</dbReference>
<dbReference type="EMBL" id="AK292124">
    <property type="protein sequence ID" value="BAF84813.1"/>
    <property type="molecule type" value="mRNA"/>
</dbReference>
<dbReference type="EMBL" id="AK295409">
    <property type="protein sequence ID" value="BAG58360.1"/>
    <property type="molecule type" value="mRNA"/>
</dbReference>
<dbReference type="EMBL" id="DQ314885">
    <property type="protein sequence ID" value="ABC40744.1"/>
    <property type="molecule type" value="Genomic_DNA"/>
</dbReference>
<dbReference type="EMBL" id="AC024224">
    <property type="status" value="NOT_ANNOTATED_CDS"/>
    <property type="molecule type" value="Genomic_DNA"/>
</dbReference>
<dbReference type="EMBL" id="CH471094">
    <property type="protein sequence ID" value="EAW96157.1"/>
    <property type="molecule type" value="Genomic_DNA"/>
</dbReference>
<dbReference type="EMBL" id="CH471094">
    <property type="protein sequence ID" value="EAW96158.1"/>
    <property type="molecule type" value="Genomic_DNA"/>
</dbReference>
<dbReference type="EMBL" id="BC022295">
    <property type="protein sequence ID" value="AAH22295.1"/>
    <property type="molecule type" value="mRNA"/>
</dbReference>
<dbReference type="CCDS" id="CCDS53745.1">
    <molecule id="P78380-2"/>
</dbReference>
<dbReference type="CCDS" id="CCDS53746.1">
    <molecule id="P78380-3"/>
</dbReference>
<dbReference type="CCDS" id="CCDS8618.1">
    <molecule id="P78380-1"/>
</dbReference>
<dbReference type="RefSeq" id="NP_001166103.1">
    <molecule id="P78380-2"/>
    <property type="nucleotide sequence ID" value="NM_001172632.2"/>
</dbReference>
<dbReference type="RefSeq" id="NP_001166104.1">
    <molecule id="P78380-3"/>
    <property type="nucleotide sequence ID" value="NM_001172633.2"/>
</dbReference>
<dbReference type="RefSeq" id="NP_002534.1">
    <molecule id="P78380-1"/>
    <property type="nucleotide sequence ID" value="NM_002543.4"/>
</dbReference>
<dbReference type="RefSeq" id="XP_047284863.1">
    <molecule id="P78380-1"/>
    <property type="nucleotide sequence ID" value="XM_047428907.1"/>
</dbReference>
<dbReference type="PDB" id="1YPO">
    <property type="method" value="X-ray"/>
    <property type="resolution" value="3.00 A"/>
    <property type="chains" value="A/B/C/D/E/F/G/H=142-272"/>
</dbReference>
<dbReference type="PDB" id="1YPQ">
    <property type="method" value="X-ray"/>
    <property type="resolution" value="1.40 A"/>
    <property type="chains" value="A/B=136-270"/>
</dbReference>
<dbReference type="PDB" id="1YPU">
    <property type="method" value="X-ray"/>
    <property type="resolution" value="2.05 A"/>
    <property type="chains" value="A/B=136-270"/>
</dbReference>
<dbReference type="PDB" id="1YXJ">
    <property type="method" value="X-ray"/>
    <property type="resolution" value="1.78 A"/>
    <property type="chains" value="A/B=143-271"/>
</dbReference>
<dbReference type="PDB" id="1YXK">
    <property type="method" value="X-ray"/>
    <property type="resolution" value="2.40 A"/>
    <property type="chains" value="A/B=136-270"/>
</dbReference>
<dbReference type="PDB" id="3VLG">
    <property type="method" value="X-ray"/>
    <property type="resolution" value="2.30 A"/>
    <property type="chains" value="A=133-273"/>
</dbReference>
<dbReference type="PDB" id="6TL7">
    <property type="method" value="X-ray"/>
    <property type="resolution" value="1.11 A"/>
    <property type="chains" value="A/B=143-273"/>
</dbReference>
<dbReference type="PDB" id="6TL9">
    <property type="method" value="X-ray"/>
    <property type="resolution" value="2.73 A"/>
    <property type="chains" value="A/B/C/D/E/F/G/H=143-273"/>
</dbReference>
<dbReference type="PDB" id="6TLA">
    <property type="method" value="X-ray"/>
    <property type="resolution" value="2.16 A"/>
    <property type="chains" value="A/B/C=129-273"/>
</dbReference>
<dbReference type="PDB" id="7R8U">
    <property type="method" value="X-ray"/>
    <property type="resolution" value="1.90 A"/>
    <property type="chains" value="AAA/BBB=140-271"/>
</dbReference>
<dbReference type="PDB" id="7W5D">
    <property type="method" value="X-ray"/>
    <property type="resolution" value="1.14 A"/>
    <property type="chains" value="A/B=136-273"/>
</dbReference>
<dbReference type="PDB" id="7XMP">
    <property type="method" value="X-ray"/>
    <property type="resolution" value="1.27 A"/>
    <property type="chains" value="A=136-273"/>
</dbReference>
<dbReference type="PDBsum" id="1YPO"/>
<dbReference type="PDBsum" id="1YPQ"/>
<dbReference type="PDBsum" id="1YPU"/>
<dbReference type="PDBsum" id="1YXJ"/>
<dbReference type="PDBsum" id="1YXK"/>
<dbReference type="PDBsum" id="3VLG"/>
<dbReference type="PDBsum" id="6TL7"/>
<dbReference type="PDBsum" id="6TL9"/>
<dbReference type="PDBsum" id="6TLA"/>
<dbReference type="PDBsum" id="7R8U"/>
<dbReference type="PDBsum" id="7W5D"/>
<dbReference type="PDBsum" id="7XMP"/>
<dbReference type="SMR" id="P78380"/>
<dbReference type="BioGRID" id="111021">
    <property type="interactions" value="28"/>
</dbReference>
<dbReference type="DIP" id="DIP-42040N"/>
<dbReference type="FunCoup" id="P78380">
    <property type="interactions" value="270"/>
</dbReference>
<dbReference type="IntAct" id="P78380">
    <property type="interactions" value="11"/>
</dbReference>
<dbReference type="MINT" id="P78380"/>
<dbReference type="STRING" id="9606.ENSP00000309124"/>
<dbReference type="ChEMBL" id="CHEMBL3421522"/>
<dbReference type="GlyCosmos" id="P78380">
    <property type="glycosylation" value="2 sites, No reported glycans"/>
</dbReference>
<dbReference type="GlyGen" id="P78380">
    <property type="glycosylation" value="5 sites"/>
</dbReference>
<dbReference type="iPTMnet" id="P78380"/>
<dbReference type="PhosphoSitePlus" id="P78380"/>
<dbReference type="SwissPalm" id="P78380"/>
<dbReference type="BioMuta" id="OLR1"/>
<dbReference type="DMDM" id="73621335"/>
<dbReference type="jPOST" id="P78380"/>
<dbReference type="MassIVE" id="P78380"/>
<dbReference type="PaxDb" id="9606-ENSP00000309124"/>
<dbReference type="PeptideAtlas" id="P78380"/>
<dbReference type="ProteomicsDB" id="32344"/>
<dbReference type="ProteomicsDB" id="57601">
    <molecule id="P78380-1"/>
</dbReference>
<dbReference type="ProteomicsDB" id="57602">
    <molecule id="P78380-2"/>
</dbReference>
<dbReference type="ABCD" id="P78380">
    <property type="antibodies" value="33 sequenced antibodies"/>
</dbReference>
<dbReference type="Antibodypedia" id="11685">
    <property type="antibodies" value="697 antibodies from 42 providers"/>
</dbReference>
<dbReference type="DNASU" id="4973"/>
<dbReference type="Ensembl" id="ENST00000309539.8">
    <molecule id="P78380-1"/>
    <property type="protein sequence ID" value="ENSP00000309124.3"/>
    <property type="gene ID" value="ENSG00000173391.9"/>
</dbReference>
<dbReference type="Ensembl" id="ENST00000432556.6">
    <molecule id="P78380-2"/>
    <property type="protein sequence ID" value="ENSP00000405116.2"/>
    <property type="gene ID" value="ENSG00000173391.9"/>
</dbReference>
<dbReference type="Ensembl" id="ENST00000545927.5">
    <molecule id="P78380-3"/>
    <property type="protein sequence ID" value="ENSP00000439251.1"/>
    <property type="gene ID" value="ENSG00000173391.9"/>
</dbReference>
<dbReference type="GeneID" id="4973"/>
<dbReference type="KEGG" id="hsa:4973"/>
<dbReference type="MANE-Select" id="ENST00000309539.8">
    <property type="protein sequence ID" value="ENSP00000309124.3"/>
    <property type="RefSeq nucleotide sequence ID" value="NM_002543.4"/>
    <property type="RefSeq protein sequence ID" value="NP_002534.1"/>
</dbReference>
<dbReference type="UCSC" id="uc001qxo.2">
    <molecule id="P78380-1"/>
    <property type="organism name" value="human"/>
</dbReference>
<dbReference type="AGR" id="HGNC:8133"/>
<dbReference type="CTD" id="4973"/>
<dbReference type="DisGeNET" id="4973"/>
<dbReference type="GeneCards" id="OLR1"/>
<dbReference type="HGNC" id="HGNC:8133">
    <property type="gene designation" value="OLR1"/>
</dbReference>
<dbReference type="HPA" id="ENSG00000173391">
    <property type="expression patterns" value="Tissue enhanced (lung, placenta)"/>
</dbReference>
<dbReference type="MalaCards" id="OLR1"/>
<dbReference type="MIM" id="602601">
    <property type="type" value="gene+phenotype"/>
</dbReference>
<dbReference type="neXtProt" id="NX_P78380"/>
<dbReference type="OpenTargets" id="ENSG00000173391"/>
<dbReference type="PharmGKB" id="PA31920"/>
<dbReference type="VEuPathDB" id="HostDB:ENSG00000173391"/>
<dbReference type="eggNOG" id="KOG4297">
    <property type="taxonomic scope" value="Eukaryota"/>
</dbReference>
<dbReference type="GeneTree" id="ENSGT00940000161941"/>
<dbReference type="InParanoid" id="P78380"/>
<dbReference type="OMA" id="NYSWLWE"/>
<dbReference type="OrthoDB" id="6133475at2759"/>
<dbReference type="PAN-GO" id="P78380">
    <property type="GO annotations" value="7 GO annotations based on evolutionary models"/>
</dbReference>
<dbReference type="PhylomeDB" id="P78380"/>
<dbReference type="TreeFam" id="TF336674"/>
<dbReference type="PathwayCommons" id="P78380"/>
<dbReference type="Reactome" id="R-HSA-202733">
    <property type="pathway name" value="Cell surface interactions at the vascular wall"/>
</dbReference>
<dbReference type="Reactome" id="R-HSA-6798695">
    <property type="pathway name" value="Neutrophil degranulation"/>
</dbReference>
<dbReference type="SignaLink" id="P78380"/>
<dbReference type="BioGRID-ORCS" id="4973">
    <property type="hits" value="13 hits in 1158 CRISPR screens"/>
</dbReference>
<dbReference type="ChiTaRS" id="OLR1">
    <property type="organism name" value="human"/>
</dbReference>
<dbReference type="EvolutionaryTrace" id="P78380"/>
<dbReference type="GeneWiki" id="OLR1"/>
<dbReference type="GenomeRNAi" id="4973"/>
<dbReference type="Pharos" id="P78380">
    <property type="development level" value="Tbio"/>
</dbReference>
<dbReference type="PRO" id="PR:P78380"/>
<dbReference type="Proteomes" id="UP000005640">
    <property type="component" value="Chromosome 12"/>
</dbReference>
<dbReference type="RNAct" id="P78380">
    <property type="molecule type" value="protein"/>
</dbReference>
<dbReference type="Bgee" id="ENSG00000173391">
    <property type="expression patterns" value="Expressed in right lung and 130 other cell types or tissues"/>
</dbReference>
<dbReference type="ExpressionAtlas" id="P78380">
    <property type="expression patterns" value="baseline and differential"/>
</dbReference>
<dbReference type="GO" id="GO:0005576">
    <property type="term" value="C:extracellular region"/>
    <property type="evidence" value="ECO:0007669"/>
    <property type="project" value="UniProtKB-SubCell"/>
</dbReference>
<dbReference type="GO" id="GO:0043231">
    <property type="term" value="C:intracellular membrane-bounded organelle"/>
    <property type="evidence" value="ECO:0000314"/>
    <property type="project" value="HPA"/>
</dbReference>
<dbReference type="GO" id="GO:0016020">
    <property type="term" value="C:membrane"/>
    <property type="evidence" value="ECO:0000304"/>
    <property type="project" value="ProtInc"/>
</dbReference>
<dbReference type="GO" id="GO:0045121">
    <property type="term" value="C:membrane raft"/>
    <property type="evidence" value="ECO:0007669"/>
    <property type="project" value="UniProtKB-SubCell"/>
</dbReference>
<dbReference type="GO" id="GO:0005654">
    <property type="term" value="C:nucleoplasm"/>
    <property type="evidence" value="ECO:0000314"/>
    <property type="project" value="HPA"/>
</dbReference>
<dbReference type="GO" id="GO:0005886">
    <property type="term" value="C:plasma membrane"/>
    <property type="evidence" value="ECO:0000314"/>
    <property type="project" value="HPA"/>
</dbReference>
<dbReference type="GO" id="GO:0043235">
    <property type="term" value="C:receptor complex"/>
    <property type="evidence" value="ECO:0000314"/>
    <property type="project" value="MGI"/>
</dbReference>
<dbReference type="GO" id="GO:0035579">
    <property type="term" value="C:specific granule membrane"/>
    <property type="evidence" value="ECO:0000304"/>
    <property type="project" value="Reactome"/>
</dbReference>
<dbReference type="GO" id="GO:0070821">
    <property type="term" value="C:tertiary granule membrane"/>
    <property type="evidence" value="ECO:0000304"/>
    <property type="project" value="Reactome"/>
</dbReference>
<dbReference type="GO" id="GO:0030246">
    <property type="term" value="F:carbohydrate binding"/>
    <property type="evidence" value="ECO:0007669"/>
    <property type="project" value="UniProtKB-KW"/>
</dbReference>
<dbReference type="GO" id="GO:0042802">
    <property type="term" value="F:identical protein binding"/>
    <property type="evidence" value="ECO:0000353"/>
    <property type="project" value="IntAct"/>
</dbReference>
<dbReference type="GO" id="GO:0005041">
    <property type="term" value="F:low-density lipoprotein particle receptor activity"/>
    <property type="evidence" value="ECO:0000318"/>
    <property type="project" value="GO_Central"/>
</dbReference>
<dbReference type="GO" id="GO:0008015">
    <property type="term" value="P:blood circulation"/>
    <property type="evidence" value="ECO:0000304"/>
    <property type="project" value="ProtInc"/>
</dbReference>
<dbReference type="GO" id="GO:0002376">
    <property type="term" value="P:immune system process"/>
    <property type="evidence" value="ECO:0007669"/>
    <property type="project" value="UniProtKB-KW"/>
</dbReference>
<dbReference type="GO" id="GO:0006954">
    <property type="term" value="P:inflammatory response"/>
    <property type="evidence" value="ECO:0007669"/>
    <property type="project" value="UniProtKB-KW"/>
</dbReference>
<dbReference type="GO" id="GO:0007159">
    <property type="term" value="P:leukocyte cell-cell adhesion"/>
    <property type="evidence" value="ECO:0000318"/>
    <property type="project" value="GO_Central"/>
</dbReference>
<dbReference type="GO" id="GO:0042157">
    <property type="term" value="P:lipoprotein metabolic process"/>
    <property type="evidence" value="ECO:0000318"/>
    <property type="project" value="GO_Central"/>
</dbReference>
<dbReference type="GO" id="GO:0006508">
    <property type="term" value="P:proteolysis"/>
    <property type="evidence" value="ECO:0000304"/>
    <property type="project" value="ProtInc"/>
</dbReference>
<dbReference type="CDD" id="cd03593">
    <property type="entry name" value="CLECT_NK_receptors_like"/>
    <property type="match status" value="1"/>
</dbReference>
<dbReference type="FunFam" id="3.10.100.10:FF:000079">
    <property type="entry name" value="Oxidized low-density lipoprotein receptor 1"/>
    <property type="match status" value="1"/>
</dbReference>
<dbReference type="Gene3D" id="3.10.100.10">
    <property type="entry name" value="Mannose-Binding Protein A, subunit A"/>
    <property type="match status" value="1"/>
</dbReference>
<dbReference type="InterPro" id="IPR001304">
    <property type="entry name" value="C-type_lectin-like"/>
</dbReference>
<dbReference type="InterPro" id="IPR016186">
    <property type="entry name" value="C-type_lectin-like/link_sf"/>
</dbReference>
<dbReference type="InterPro" id="IPR016187">
    <property type="entry name" value="CTDL_fold"/>
</dbReference>
<dbReference type="InterPro" id="IPR033992">
    <property type="entry name" value="NKR-like_CTLD"/>
</dbReference>
<dbReference type="InterPro" id="IPR052332">
    <property type="entry name" value="OxLDL_rcpt1-like"/>
</dbReference>
<dbReference type="PANTHER" id="PTHR47298">
    <property type="entry name" value="OXIDIZED LOW-DENSITY LIPOPROTEIN RECEPTOR 1"/>
    <property type="match status" value="1"/>
</dbReference>
<dbReference type="PANTHER" id="PTHR47298:SF1">
    <property type="entry name" value="OXIDIZED LOW-DENSITY LIPOPROTEIN RECEPTOR 1"/>
    <property type="match status" value="1"/>
</dbReference>
<dbReference type="Pfam" id="PF00059">
    <property type="entry name" value="Lectin_C"/>
    <property type="match status" value="1"/>
</dbReference>
<dbReference type="SMART" id="SM00034">
    <property type="entry name" value="CLECT"/>
    <property type="match status" value="1"/>
</dbReference>
<dbReference type="SUPFAM" id="SSF56436">
    <property type="entry name" value="C-type lectin-like"/>
    <property type="match status" value="1"/>
</dbReference>
<dbReference type="PROSITE" id="PS50041">
    <property type="entry name" value="C_TYPE_LECTIN_2"/>
    <property type="match status" value="1"/>
</dbReference>
<protein>
    <recommendedName>
        <fullName>Oxidized low-density lipoprotein receptor 1</fullName>
        <shortName>Ox-LDL receptor 1</shortName>
    </recommendedName>
    <alternativeName>
        <fullName>C-type lectin domain family 8 member A</fullName>
    </alternativeName>
    <alternativeName>
        <fullName>Lectin-like oxidized LDL receptor 1</fullName>
        <shortName>LOX-1</shortName>
        <shortName>Lectin-like oxLDL receptor 1</shortName>
        <shortName>hLOX-1</shortName>
    </alternativeName>
    <alternativeName>
        <fullName>Lectin-type oxidized LDL receptor 1</fullName>
    </alternativeName>
    <component>
        <recommendedName>
            <fullName>Oxidized low-density lipoprotein receptor 1, soluble form</fullName>
        </recommendedName>
    </component>
</protein>
<feature type="chain" id="PRO_0000017443" description="Oxidized low-density lipoprotein receptor 1">
    <location>
        <begin position="1"/>
        <end position="273"/>
    </location>
</feature>
<feature type="chain" id="PRO_0000017444" description="Oxidized low-density lipoprotein receptor 1, soluble form">
    <location>
        <begin status="unknown"/>
        <end position="273"/>
    </location>
</feature>
<feature type="topological domain" description="Cytoplasmic" evidence="1">
    <location>
        <begin position="1"/>
        <end position="36"/>
    </location>
</feature>
<feature type="transmembrane region" description="Helical; Signal-anchor for type II membrane protein" evidence="1">
    <location>
        <begin position="37"/>
        <end position="57"/>
    </location>
</feature>
<feature type="topological domain" description="Extracellular" evidence="1">
    <location>
        <begin position="58"/>
        <end position="273"/>
    </location>
</feature>
<feature type="domain" description="C-type lectin" evidence="2">
    <location>
        <begin position="151"/>
        <end position="265"/>
    </location>
</feature>
<feature type="region of interest" description="Disordered" evidence="3">
    <location>
        <begin position="1"/>
        <end position="22"/>
    </location>
</feature>
<feature type="region of interest" description="Neck">
    <location>
        <begin position="58"/>
        <end position="150"/>
    </location>
</feature>
<feature type="coiled-coil region" evidence="1">
    <location>
        <begin position="64"/>
        <end position="123"/>
    </location>
</feature>
<feature type="site" description="Not glycosylated" evidence="25">
    <location>
        <position position="183"/>
    </location>
</feature>
<feature type="lipid moiety-binding region" description="S-palmitoyl cysteine" evidence="18">
    <location>
        <position position="36"/>
    </location>
</feature>
<feature type="lipid moiety-binding region" description="S-palmitoyl cysteine" evidence="18">
    <location>
        <position position="46"/>
    </location>
</feature>
<feature type="glycosylation site" description="N-linked (GlcNAc...) asparagine" evidence="1">
    <location>
        <position position="73"/>
    </location>
</feature>
<feature type="glycosylation site" description="N-linked (GlcNAc...) (complex) asparagine" evidence="17">
    <location>
        <position position="139"/>
    </location>
</feature>
<feature type="disulfide bond" description="Interchain">
    <location>
        <position position="140"/>
    </location>
</feature>
<feature type="disulfide bond">
    <location>
        <begin position="144"/>
        <end position="155"/>
    </location>
</feature>
<feature type="disulfide bond">
    <location>
        <begin position="172"/>
        <end position="264"/>
    </location>
</feature>
<feature type="disulfide bond">
    <location>
        <begin position="243"/>
        <end position="256"/>
    </location>
</feature>
<feature type="splice variant" id="VSP_042555" description="In isoform 2." evidence="23">
    <original>APCPQDWIWHGENCYLFSSGSFNWEKSQEKCLSLDAKLLKINSTADLDFIQQAISYSSFPFWMGLSRRNPSYPWLWEDGSPLMPHLFRVRGAVSQTYPSGTCAYIQRGAVYAENCILAAFSICQKKANLRAQ</original>
    <variation>GLHPASNFLFQFSILDGAVSEEPQLPMALGGRFSFDAPLI</variation>
    <location>
        <begin position="142"/>
        <end position="273"/>
    </location>
</feature>
<feature type="splice variant" id="VSP_045277" description="In isoform 3." evidence="24">
    <original>DFIQQAISYSSFPFWMGLSRRNPSYPWLWEDGSPLMPHLFRVRGAVSQTYPSGTCAYIQRGAVYAENCILAAFSICQKKANLRAQ</original>
    <variation>I</variation>
    <location>
        <begin position="189"/>
        <end position="273"/>
    </location>
</feature>
<feature type="sequence variant" id="VAR_023200" description="Myocardial infarction susceptibility; dbSNP:rs11053646." evidence="8 11">
    <original>K</original>
    <variation>N</variation>
    <location>
        <position position="167"/>
    </location>
</feature>
<feature type="mutagenesis site" description="Impairs sorting into the cell surface but retains ability to bind oxLDL. Abolishes sorting into the cell surface; when associated with K-69." evidence="15">
    <original>KKAK</original>
    <variation>EEAE</variation>
    <location>
        <begin position="22"/>
        <end position="25"/>
    </location>
</feature>
<feature type="mutagenesis site" description="Abolishes sorting into the cell surface; when associated with 22-E--E-25." evidence="15">
    <original>E</original>
    <variation>K</variation>
    <location>
        <position position="70"/>
    </location>
</feature>
<feature type="mutagenesis site" description="Abolishes homodimerization." evidence="12">
    <original>C</original>
    <variation>S</variation>
    <location>
        <position position="140"/>
    </location>
</feature>
<feature type="mutagenesis site" description="Abolishes sorting into the cell surface and binding to acetylated LDL (AcLDL) while increasing N-glycosylation; when associated with S-155; S-172; S-243; S-256 and S-264." evidence="4">
    <original>C</original>
    <variation>S</variation>
    <location>
        <position position="144"/>
    </location>
</feature>
<feature type="mutagenesis site" description="Abolishes binding to acetylated LDL (AcLDL), probably due to inappropriate homodimerization." evidence="16">
    <original>W</original>
    <variation>A</variation>
    <location>
        <position position="150"/>
    </location>
</feature>
<feature type="mutagenesis site" description="Abolishes sorting into the cell surface and binding to acetylated LDL (AcLDL) while increasing N-glycosylation; when associated with S-144; S-172; S-243; S-256 and S-264." evidence="4">
    <original>C</original>
    <variation>S</variation>
    <location>
        <position position="155"/>
    </location>
</feature>
<feature type="mutagenesis site" description="Abolishes sorting into the cell surface and binding to acetylated LDL (AcLDL) while increasing N-glycosylation; when associated with S-144; S-155; S-243; S-256 and S-264." evidence="4">
    <original>C</original>
    <variation>S</variation>
    <location>
        <position position="172"/>
    </location>
</feature>
<feature type="mutagenesis site" description="Does not affect glycosylation state." evidence="4">
    <original>N</original>
    <variation>Q</variation>
    <location>
        <position position="183"/>
    </location>
</feature>
<feature type="mutagenesis site" description="Impairs binding to acetylated LDL (AcLDL); when associated with 198-AA-199.">
    <original>Q</original>
    <variation>L</variation>
    <location>
        <position position="193"/>
    </location>
</feature>
<feature type="mutagenesis site" description="Impairs binding to acetylated LDL (AcLDL); when associated with L-193.">
    <original>SS</original>
    <variation>AA</variation>
    <location>
        <begin position="198"/>
        <end position="199"/>
    </location>
</feature>
<feature type="mutagenesis site" description="Does not affect subcellular location but displays a strongly reduced affinity for acetylated LDL (AcLDL)." evidence="16">
    <original>R</original>
    <variation>N</variation>
    <location>
        <position position="208"/>
    </location>
</feature>
<feature type="mutagenesis site" description="Abolishes binding to acetylated LDL (AcLDL)." evidence="4">
    <original>RN</original>
    <variation>LL</variation>
    <location>
        <begin position="209"/>
        <end position="210"/>
    </location>
</feature>
<feature type="mutagenesis site" description="Does not affect binding to acetylated LDL (AcLDL)." evidence="16">
    <original>R</original>
    <variation>N</variation>
    <location>
        <position position="209"/>
    </location>
</feature>
<feature type="mutagenesis site" description="No effect." evidence="4 16">
    <original>H</original>
    <variation>A</variation>
    <location>
        <position position="226"/>
    </location>
</feature>
<feature type="mutagenesis site" description="Abolishes binding to acetylated LDL (AcLDL); when associated with N-229 and N-231." evidence="4 16">
    <original>H</original>
    <variation>Q</variation>
    <location>
        <position position="226"/>
    </location>
</feature>
<feature type="mutagenesis site" description="Does not affect subcellular location but displays a reduced affinity for acetylated LDL (AcLDL). Abolishes binding to acetylated LDL (AcLDL); when associated with Q-226 and N-231." evidence="4 16">
    <original>R</original>
    <variation>N</variation>
    <location>
        <position position="229"/>
    </location>
</feature>
<feature type="mutagenesis site" description="Abolishes binding to acetylated LDL (AcLDL). Abolishes binding to AcLDL; when associated with Q-226 and N-229." evidence="4 16">
    <original>R</original>
    <variation>N</variation>
    <location>
        <position position="231"/>
    </location>
</feature>
<feature type="mutagenesis site" description="Impairs binding to acetylated LDL (AcLDL); when associated with A-240." evidence="4">
    <original>SQ</original>
    <variation>AL</variation>
    <location>
        <begin position="235"/>
        <end position="236"/>
    </location>
</feature>
<feature type="mutagenesis site" description="Impairs binding to acetylated LDL (AcLDL); when associated with 235-AL-236." evidence="4">
    <original>S</original>
    <variation>A</variation>
    <location>
        <position position="240"/>
    </location>
</feature>
<feature type="mutagenesis site" description="Abolishes sorting into the cell surface and binding to acetylated LDL (AcLDL) while increasing N-glycosylation; when associated with S-144; S-155; S-172; S-256 and S-264." evidence="4">
    <original>C</original>
    <variation>S</variation>
    <location>
        <position position="243"/>
    </location>
</feature>
<feature type="mutagenesis site" description="Does not affect subcellular location but displays a reduced affinity for acetylated LDL (AcLDL)." evidence="16">
    <original>R</original>
    <variation>N</variation>
    <location>
        <position position="248"/>
    </location>
</feature>
<feature type="mutagenesis site" description="Abolishes sorting into the cell surface and binding to acetylated LDL (AcLDL) while increasing N-glycosylation; when associated with S-144; S-155; S-172; S-243 and S-264." evidence="4">
    <original>C</original>
    <variation>S</variation>
    <location>
        <position position="256"/>
    </location>
</feature>
<feature type="mutagenesis site" description="Abolishes sorting into the cell surface and binding to acetylated LDL (AcLDL) while increasing N-glycosylation; when associated with S-144; S-155; S-172; S-243 and S-256." evidence="4">
    <original>C</original>
    <variation>S</variation>
    <location>
        <position position="264"/>
    </location>
</feature>
<feature type="mutagenesis site" description="Impairs protein folding and transport." evidence="4">
    <location>
        <begin position="267"/>
        <end position="273"/>
    </location>
</feature>
<feature type="strand" evidence="28">
    <location>
        <begin position="148"/>
        <end position="151"/>
    </location>
</feature>
<feature type="strand" evidence="28">
    <location>
        <begin position="154"/>
        <end position="158"/>
    </location>
</feature>
<feature type="helix" evidence="28">
    <location>
        <begin position="165"/>
        <end position="174"/>
    </location>
</feature>
<feature type="helix" evidence="28">
    <location>
        <begin position="185"/>
        <end position="194"/>
    </location>
</feature>
<feature type="turn" evidence="28">
    <location>
        <begin position="195"/>
        <end position="197"/>
    </location>
</feature>
<feature type="strand" evidence="28">
    <location>
        <begin position="202"/>
        <end position="210"/>
    </location>
</feature>
<feature type="strand" evidence="27">
    <location>
        <begin position="225"/>
        <end position="227"/>
    </location>
</feature>
<feature type="strand" evidence="28">
    <location>
        <begin position="230"/>
        <end position="233"/>
    </location>
</feature>
<feature type="strand" evidence="28">
    <location>
        <begin position="242"/>
        <end position="247"/>
    </location>
</feature>
<feature type="strand" evidence="28">
    <location>
        <begin position="250"/>
        <end position="255"/>
    </location>
</feature>
<feature type="strand" evidence="28">
    <location>
        <begin position="260"/>
        <end position="267"/>
    </location>
</feature>